<comment type="similarity">
    <text evidence="1">Belongs to the UPF0181 family.</text>
</comment>
<keyword id="KW-1185">Reference proteome</keyword>
<protein>
    <recommendedName>
        <fullName evidence="1">UPF0181 protein YoaH</fullName>
    </recommendedName>
</protein>
<dbReference type="EMBL" id="AE014075">
    <property type="protein sequence ID" value="AAN80675.1"/>
    <property type="molecule type" value="Genomic_DNA"/>
</dbReference>
<dbReference type="RefSeq" id="WP_000457334.1">
    <property type="nucleotide sequence ID" value="NZ_CP051263.1"/>
</dbReference>
<dbReference type="SMR" id="P67339"/>
<dbReference type="STRING" id="199310.c2216"/>
<dbReference type="KEGG" id="ecc:c2216"/>
<dbReference type="eggNOG" id="COG3140">
    <property type="taxonomic scope" value="Bacteria"/>
</dbReference>
<dbReference type="HOGENOM" id="CLU_185263_0_0_6"/>
<dbReference type="BioCyc" id="ECOL199310:C2216-MONOMER"/>
<dbReference type="Proteomes" id="UP000001410">
    <property type="component" value="Chromosome"/>
</dbReference>
<dbReference type="HAMAP" id="MF_00507">
    <property type="entry name" value="UPF0181"/>
    <property type="match status" value="1"/>
</dbReference>
<dbReference type="InterPro" id="IPR005371">
    <property type="entry name" value="UPF0181"/>
</dbReference>
<dbReference type="NCBIfam" id="NF003476">
    <property type="entry name" value="PRK05114.1"/>
    <property type="match status" value="1"/>
</dbReference>
<dbReference type="Pfam" id="PF03701">
    <property type="entry name" value="UPF0181"/>
    <property type="match status" value="1"/>
</dbReference>
<sequence length="59" mass="6554">MFAGLPSLTHEQQQKAVERIQELMAQGMSSGQAIALVAEELRANHSGERIVARFEDEDE</sequence>
<evidence type="ECO:0000255" key="1">
    <source>
        <dbReference type="HAMAP-Rule" id="MF_00507"/>
    </source>
</evidence>
<reference key="1">
    <citation type="journal article" date="2002" name="Proc. Natl. Acad. Sci. U.S.A.">
        <title>Extensive mosaic structure revealed by the complete genome sequence of uropathogenic Escherichia coli.</title>
        <authorList>
            <person name="Welch R.A."/>
            <person name="Burland V."/>
            <person name="Plunkett G. III"/>
            <person name="Redford P."/>
            <person name="Roesch P."/>
            <person name="Rasko D."/>
            <person name="Buckles E.L."/>
            <person name="Liou S.-R."/>
            <person name="Boutin A."/>
            <person name="Hackett J."/>
            <person name="Stroud D."/>
            <person name="Mayhew G.F."/>
            <person name="Rose D.J."/>
            <person name="Zhou S."/>
            <person name="Schwartz D.C."/>
            <person name="Perna N.T."/>
            <person name="Mobley H.L.T."/>
            <person name="Donnenberg M.S."/>
            <person name="Blattner F.R."/>
        </authorList>
    </citation>
    <scope>NUCLEOTIDE SEQUENCE [LARGE SCALE GENOMIC DNA]</scope>
    <source>
        <strain>CFT073 / ATCC 700928 / UPEC</strain>
    </source>
</reference>
<organism>
    <name type="scientific">Escherichia coli O6:H1 (strain CFT073 / ATCC 700928 / UPEC)</name>
    <dbReference type="NCBI Taxonomy" id="199310"/>
    <lineage>
        <taxon>Bacteria</taxon>
        <taxon>Pseudomonadati</taxon>
        <taxon>Pseudomonadota</taxon>
        <taxon>Gammaproteobacteria</taxon>
        <taxon>Enterobacterales</taxon>
        <taxon>Enterobacteriaceae</taxon>
        <taxon>Escherichia</taxon>
    </lineage>
</organism>
<name>YOAH_ECOL6</name>
<proteinExistence type="inferred from homology"/>
<accession>P67339</accession>
<accession>P76260</accession>
<gene>
    <name evidence="1" type="primary">yoaH</name>
    <name type="ordered locus">c2216</name>
</gene>
<feature type="chain" id="PRO_0000216193" description="UPF0181 protein YoaH">
    <location>
        <begin position="1"/>
        <end position="59"/>
    </location>
</feature>